<evidence type="ECO:0000255" key="1">
    <source>
        <dbReference type="HAMAP-Rule" id="MF_01003"/>
    </source>
</evidence>
<comment type="function">
    <text evidence="1">Probably involved in the polymerization of enterobacterial common antigen (ECA) trisaccharide repeat units.</text>
</comment>
<comment type="pathway">
    <text evidence="1">Bacterial outer membrane biogenesis; enterobacterial common antigen biosynthesis.</text>
</comment>
<comment type="subunit">
    <text evidence="1">Probably part of a complex composed of WzxE, WzyE and WzzE.</text>
</comment>
<comment type="subcellular location">
    <subcellularLocation>
        <location evidence="1">Cell inner membrane</location>
        <topology evidence="1">Multi-pass membrane protein</topology>
    </subcellularLocation>
</comment>
<comment type="similarity">
    <text evidence="1">Belongs to the WzyE family.</text>
</comment>
<name>WZYE_ECOSE</name>
<proteinExistence type="inferred from homology"/>
<sequence>MSLLQFSGLFVVWLLCTLFIATLTWFEFRRVRFNFNVFFSLLFLLTFFFGFPLTSVLVFRFDVGVAPPEILLQALLSAGCFYAVYYVTYKTRLRKRVADVPRRPLFTMNRVETNLTWVILMGIALVSVGIFFMHNGFLLFRLNSYSQIFSSEVSGVALKRFFYFFIPAMLVVYFLRQDSKAWLFFLVSTVAFGLLTYMIVGGTRANIIIAFAIFLFIGIIRGWISLWMLAAAGVLGIVGMFWLALKRYGMNVSGDEAFYTFLYLTRDTFSPWENLALLLQNYDNIDFQGLAPIVRDFYVFIPSWLWPGRPSMVLNSANYFTWEVLNNHSGLAISPTLIGSLVVMGGALFIPLGAIVVGLIIKWFDWLYELGNRETNRYKAAILHSFCFGAIFNMIVLAREGLDSFVSRVVFFIVVFGACLMIAKLLYWLFESAGLIHKRTKSSLRTQVEG</sequence>
<organism>
    <name type="scientific">Escherichia coli (strain SE11)</name>
    <dbReference type="NCBI Taxonomy" id="409438"/>
    <lineage>
        <taxon>Bacteria</taxon>
        <taxon>Pseudomonadati</taxon>
        <taxon>Pseudomonadota</taxon>
        <taxon>Gammaproteobacteria</taxon>
        <taxon>Enterobacterales</taxon>
        <taxon>Enterobacteriaceae</taxon>
        <taxon>Escherichia</taxon>
    </lineage>
</organism>
<protein>
    <recommendedName>
        <fullName evidence="1">Probable ECA polymerase</fullName>
    </recommendedName>
</protein>
<accession>B6I4D1</accession>
<gene>
    <name evidence="1" type="primary">wzyE</name>
    <name type="ordered locus">ECSE_4077</name>
</gene>
<reference key="1">
    <citation type="journal article" date="2008" name="DNA Res.">
        <title>Complete genome sequence and comparative analysis of the wild-type commensal Escherichia coli strain SE11 isolated from a healthy adult.</title>
        <authorList>
            <person name="Oshima K."/>
            <person name="Toh H."/>
            <person name="Ogura Y."/>
            <person name="Sasamoto H."/>
            <person name="Morita H."/>
            <person name="Park S.-H."/>
            <person name="Ooka T."/>
            <person name="Iyoda S."/>
            <person name="Taylor T.D."/>
            <person name="Hayashi T."/>
            <person name="Itoh K."/>
            <person name="Hattori M."/>
        </authorList>
    </citation>
    <scope>NUCLEOTIDE SEQUENCE [LARGE SCALE GENOMIC DNA]</scope>
    <source>
        <strain>SE11</strain>
    </source>
</reference>
<feature type="chain" id="PRO_1000200204" description="Probable ECA polymerase">
    <location>
        <begin position="1"/>
        <end position="450"/>
    </location>
</feature>
<feature type="transmembrane region" description="Helical" evidence="1">
    <location>
        <begin position="6"/>
        <end position="26"/>
    </location>
</feature>
<feature type="transmembrane region" description="Helical" evidence="1">
    <location>
        <begin position="37"/>
        <end position="57"/>
    </location>
</feature>
<feature type="transmembrane region" description="Helical" evidence="1">
    <location>
        <begin position="63"/>
        <end position="83"/>
    </location>
</feature>
<feature type="transmembrane region" description="Helical" evidence="1">
    <location>
        <begin position="118"/>
        <end position="138"/>
    </location>
</feature>
<feature type="transmembrane region" description="Helical" evidence="1">
    <location>
        <begin position="155"/>
        <end position="175"/>
    </location>
</feature>
<feature type="transmembrane region" description="Helical" evidence="1">
    <location>
        <begin position="181"/>
        <end position="201"/>
    </location>
</feature>
<feature type="transmembrane region" description="Helical" evidence="1">
    <location>
        <begin position="207"/>
        <end position="227"/>
    </location>
</feature>
<feature type="transmembrane region" description="Helical" evidence="1">
    <location>
        <begin position="228"/>
        <end position="248"/>
    </location>
</feature>
<feature type="transmembrane region" description="Helical" evidence="1">
    <location>
        <begin position="341"/>
        <end position="361"/>
    </location>
</feature>
<feature type="transmembrane region" description="Helical" evidence="1">
    <location>
        <begin position="378"/>
        <end position="398"/>
    </location>
</feature>
<feature type="transmembrane region" description="Helical" evidence="1">
    <location>
        <begin position="410"/>
        <end position="430"/>
    </location>
</feature>
<keyword id="KW-0997">Cell inner membrane</keyword>
<keyword id="KW-1003">Cell membrane</keyword>
<keyword id="KW-0472">Membrane</keyword>
<keyword id="KW-0812">Transmembrane</keyword>
<keyword id="KW-1133">Transmembrane helix</keyword>
<dbReference type="EMBL" id="AP009240">
    <property type="protein sequence ID" value="BAG79601.1"/>
    <property type="molecule type" value="Genomic_DNA"/>
</dbReference>
<dbReference type="RefSeq" id="WP_000055132.1">
    <property type="nucleotide sequence ID" value="NC_011415.1"/>
</dbReference>
<dbReference type="TCDB" id="9.B.128.1.1">
    <property type="family name" value="the o-antigen polymerase, wzye (wzye) family"/>
</dbReference>
<dbReference type="GeneID" id="75204784"/>
<dbReference type="KEGG" id="ecy:ECSE_4077"/>
<dbReference type="HOGENOM" id="CLU_049711_0_0_6"/>
<dbReference type="UniPathway" id="UPA00566"/>
<dbReference type="Proteomes" id="UP000008199">
    <property type="component" value="Chromosome"/>
</dbReference>
<dbReference type="GO" id="GO:0005886">
    <property type="term" value="C:plasma membrane"/>
    <property type="evidence" value="ECO:0007669"/>
    <property type="project" value="UniProtKB-SubCell"/>
</dbReference>
<dbReference type="GO" id="GO:0009246">
    <property type="term" value="P:enterobacterial common antigen biosynthetic process"/>
    <property type="evidence" value="ECO:0007669"/>
    <property type="project" value="UniProtKB-UniRule"/>
</dbReference>
<dbReference type="HAMAP" id="MF_01003">
    <property type="entry name" value="WzyE"/>
    <property type="match status" value="1"/>
</dbReference>
<dbReference type="InterPro" id="IPR010691">
    <property type="entry name" value="WzyE"/>
</dbReference>
<dbReference type="NCBIfam" id="NF002820">
    <property type="entry name" value="PRK02975.1"/>
    <property type="match status" value="1"/>
</dbReference>
<dbReference type="Pfam" id="PF06899">
    <property type="entry name" value="WzyE"/>
    <property type="match status" value="1"/>
</dbReference>